<protein>
    <recommendedName>
        <fullName evidence="1">HTH-type transcriptional regulator IscR</fullName>
    </recommendedName>
</protein>
<comment type="function">
    <text evidence="1">Regulates the transcription of several operons and genes involved in the biogenesis of Fe-S clusters and Fe-S-containing proteins.</text>
</comment>
<comment type="cofactor">
    <cofactor evidence="1">
        <name>[2Fe-2S] cluster</name>
        <dbReference type="ChEBI" id="CHEBI:190135"/>
    </cofactor>
    <text evidence="1">Binds 1 [2Fe-2S] cluster.</text>
</comment>
<gene>
    <name evidence="1" type="primary">iscR</name>
    <name type="ordered locus">STM2544</name>
</gene>
<organism>
    <name type="scientific">Salmonella typhimurium (strain LT2 / SGSC1412 / ATCC 700720)</name>
    <dbReference type="NCBI Taxonomy" id="99287"/>
    <lineage>
        <taxon>Bacteria</taxon>
        <taxon>Pseudomonadati</taxon>
        <taxon>Pseudomonadota</taxon>
        <taxon>Gammaproteobacteria</taxon>
        <taxon>Enterobacterales</taxon>
        <taxon>Enterobacteriaceae</taxon>
        <taxon>Salmonella</taxon>
    </lineage>
</organism>
<proteinExistence type="inferred from homology"/>
<name>ISCR_SALTY</name>
<accession>Q7CQ10</accession>
<feature type="chain" id="PRO_0000268925" description="HTH-type transcriptional regulator IscR">
    <location>
        <begin position="1"/>
        <end position="164"/>
    </location>
</feature>
<feature type="domain" description="HTH rrf2-type" evidence="1">
    <location>
        <begin position="2"/>
        <end position="131"/>
    </location>
</feature>
<feature type="DNA-binding region" description="H-T-H motif" evidence="1">
    <location>
        <begin position="28"/>
        <end position="51"/>
    </location>
</feature>
<feature type="binding site" evidence="1">
    <location>
        <position position="92"/>
    </location>
    <ligand>
        <name>[2Fe-2S] cluster</name>
        <dbReference type="ChEBI" id="CHEBI:190135"/>
    </ligand>
</feature>
<feature type="binding site" evidence="1">
    <location>
        <position position="98"/>
    </location>
    <ligand>
        <name>[2Fe-2S] cluster</name>
        <dbReference type="ChEBI" id="CHEBI:190135"/>
    </ligand>
</feature>
<feature type="binding site" evidence="1">
    <location>
        <position position="104"/>
    </location>
    <ligand>
        <name>[2Fe-2S] cluster</name>
        <dbReference type="ChEBI" id="CHEBI:190135"/>
    </ligand>
</feature>
<evidence type="ECO:0000255" key="1">
    <source>
        <dbReference type="HAMAP-Rule" id="MF_01176"/>
    </source>
</evidence>
<sequence>MRLTSKGRYAVTAMLDVALNSEAGPVPLADISERQGISLSYLEQLFSRLRKNGLVSSVRGPGGGYLLGKDAGSIAVGEVISAVDESVDATRCQGKGGCQGGDKCLTHALWRDLSDRLTGFLNNITLGELVNNQEVLDVSGRQHTHDAPRASGRAQDAIDVKLRA</sequence>
<reference key="1">
    <citation type="journal article" date="2001" name="Nature">
        <title>Complete genome sequence of Salmonella enterica serovar Typhimurium LT2.</title>
        <authorList>
            <person name="McClelland M."/>
            <person name="Sanderson K.E."/>
            <person name="Spieth J."/>
            <person name="Clifton S.W."/>
            <person name="Latreille P."/>
            <person name="Courtney L."/>
            <person name="Porwollik S."/>
            <person name="Ali J."/>
            <person name="Dante M."/>
            <person name="Du F."/>
            <person name="Hou S."/>
            <person name="Layman D."/>
            <person name="Leonard S."/>
            <person name="Nguyen C."/>
            <person name="Scott K."/>
            <person name="Holmes A."/>
            <person name="Grewal N."/>
            <person name="Mulvaney E."/>
            <person name="Ryan E."/>
            <person name="Sun H."/>
            <person name="Florea L."/>
            <person name="Miller W."/>
            <person name="Stoneking T."/>
            <person name="Nhan M."/>
            <person name="Waterston R."/>
            <person name="Wilson R.K."/>
        </authorList>
    </citation>
    <scope>NUCLEOTIDE SEQUENCE [LARGE SCALE GENOMIC DNA]</scope>
    <source>
        <strain>LT2 / SGSC1412 / ATCC 700720</strain>
    </source>
</reference>
<keyword id="KW-0001">2Fe-2S</keyword>
<keyword id="KW-0010">Activator</keyword>
<keyword id="KW-0238">DNA-binding</keyword>
<keyword id="KW-0408">Iron</keyword>
<keyword id="KW-0411">Iron-sulfur</keyword>
<keyword id="KW-0479">Metal-binding</keyword>
<keyword id="KW-1185">Reference proteome</keyword>
<keyword id="KW-0678">Repressor</keyword>
<keyword id="KW-0804">Transcription</keyword>
<keyword id="KW-0805">Transcription regulation</keyword>
<dbReference type="EMBL" id="AE006468">
    <property type="protein sequence ID" value="AAL21438.1"/>
    <property type="molecule type" value="Genomic_DNA"/>
</dbReference>
<dbReference type="RefSeq" id="WP_001241346.1">
    <property type="nucleotide sequence ID" value="NC_003197.2"/>
</dbReference>
<dbReference type="SMR" id="Q7CQ10"/>
<dbReference type="STRING" id="99287.STM2544"/>
<dbReference type="PaxDb" id="99287-STM2544"/>
<dbReference type="KEGG" id="stm:STM2544"/>
<dbReference type="PATRIC" id="fig|99287.12.peg.2684"/>
<dbReference type="HOGENOM" id="CLU_107144_0_0_6"/>
<dbReference type="OMA" id="RCMTHDL"/>
<dbReference type="PhylomeDB" id="Q7CQ10"/>
<dbReference type="BioCyc" id="SENT99287:STM2544-MONOMER"/>
<dbReference type="PHI-base" id="PHI:6895"/>
<dbReference type="Proteomes" id="UP000001014">
    <property type="component" value="Chromosome"/>
</dbReference>
<dbReference type="GO" id="GO:0005829">
    <property type="term" value="C:cytosol"/>
    <property type="evidence" value="ECO:0000318"/>
    <property type="project" value="GO_Central"/>
</dbReference>
<dbReference type="GO" id="GO:0051537">
    <property type="term" value="F:2 iron, 2 sulfur cluster binding"/>
    <property type="evidence" value="ECO:0007669"/>
    <property type="project" value="UniProtKB-KW"/>
</dbReference>
<dbReference type="GO" id="GO:0003700">
    <property type="term" value="F:DNA-binding transcription factor activity"/>
    <property type="evidence" value="ECO:0000318"/>
    <property type="project" value="GO_Central"/>
</dbReference>
<dbReference type="GO" id="GO:0003690">
    <property type="term" value="F:double-stranded DNA binding"/>
    <property type="evidence" value="ECO:0007669"/>
    <property type="project" value="UniProtKB-UniRule"/>
</dbReference>
<dbReference type="GO" id="GO:0005506">
    <property type="term" value="F:iron ion binding"/>
    <property type="evidence" value="ECO:0007669"/>
    <property type="project" value="UniProtKB-UniRule"/>
</dbReference>
<dbReference type="GO" id="GO:0006355">
    <property type="term" value="P:regulation of DNA-templated transcription"/>
    <property type="evidence" value="ECO:0000318"/>
    <property type="project" value="GO_Central"/>
</dbReference>
<dbReference type="FunFam" id="1.10.10.10:FF:000026">
    <property type="entry name" value="HTH-type transcriptional regulator IscR"/>
    <property type="match status" value="1"/>
</dbReference>
<dbReference type="Gene3D" id="1.10.10.10">
    <property type="entry name" value="Winged helix-like DNA-binding domain superfamily/Winged helix DNA-binding domain"/>
    <property type="match status" value="1"/>
</dbReference>
<dbReference type="HAMAP" id="MF_01176">
    <property type="entry name" value="HTH_type_IscR"/>
    <property type="match status" value="1"/>
</dbReference>
<dbReference type="InterPro" id="IPR010242">
    <property type="entry name" value="TF_HTH_IscR"/>
</dbReference>
<dbReference type="InterPro" id="IPR030489">
    <property type="entry name" value="TR_Rrf2-type_CS"/>
</dbReference>
<dbReference type="InterPro" id="IPR000944">
    <property type="entry name" value="Tscrpt_reg_Rrf2"/>
</dbReference>
<dbReference type="InterPro" id="IPR036388">
    <property type="entry name" value="WH-like_DNA-bd_sf"/>
</dbReference>
<dbReference type="InterPro" id="IPR036390">
    <property type="entry name" value="WH_DNA-bd_sf"/>
</dbReference>
<dbReference type="NCBIfam" id="TIGR02010">
    <property type="entry name" value="IscR"/>
    <property type="match status" value="1"/>
</dbReference>
<dbReference type="NCBIfam" id="NF008110">
    <property type="entry name" value="PRK10857.1"/>
    <property type="match status" value="1"/>
</dbReference>
<dbReference type="NCBIfam" id="TIGR00738">
    <property type="entry name" value="rrf2_super"/>
    <property type="match status" value="1"/>
</dbReference>
<dbReference type="PANTHER" id="PTHR33221:SF5">
    <property type="entry name" value="HTH-TYPE TRANSCRIPTIONAL REGULATOR ISCR"/>
    <property type="match status" value="1"/>
</dbReference>
<dbReference type="PANTHER" id="PTHR33221">
    <property type="entry name" value="WINGED HELIX-TURN-HELIX TRANSCRIPTIONAL REGULATOR, RRF2 FAMILY"/>
    <property type="match status" value="1"/>
</dbReference>
<dbReference type="Pfam" id="PF02082">
    <property type="entry name" value="Rrf2"/>
    <property type="match status" value="1"/>
</dbReference>
<dbReference type="SUPFAM" id="SSF46785">
    <property type="entry name" value="Winged helix' DNA-binding domain"/>
    <property type="match status" value="1"/>
</dbReference>
<dbReference type="PROSITE" id="PS01332">
    <property type="entry name" value="HTH_RRF2_1"/>
    <property type="match status" value="1"/>
</dbReference>
<dbReference type="PROSITE" id="PS51197">
    <property type="entry name" value="HTH_RRF2_2"/>
    <property type="match status" value="1"/>
</dbReference>